<feature type="chain" id="PRO_0000161647" description="Phospholipase A2">
    <location>
        <begin position="1"/>
        <end position="39" status="greater than"/>
    </location>
</feature>
<feature type="active site" evidence="2 3">
    <location>
        <position position="36"/>
    </location>
</feature>
<feature type="non-terminal residue">
    <location>
        <position position="39"/>
    </location>
</feature>
<comment type="function">
    <text>PLA2 catalyzes the calcium-dependent hydrolysis of the 2-acyl groups in 3-sn-phosphoglycerides.</text>
</comment>
<comment type="catalytic activity">
    <reaction evidence="2 3">
        <text>a 1,2-diacyl-sn-glycero-3-phosphocholine + H2O = a 1-acyl-sn-glycero-3-phosphocholine + a fatty acid + H(+)</text>
        <dbReference type="Rhea" id="RHEA:15801"/>
        <dbReference type="ChEBI" id="CHEBI:15377"/>
        <dbReference type="ChEBI" id="CHEBI:15378"/>
        <dbReference type="ChEBI" id="CHEBI:28868"/>
        <dbReference type="ChEBI" id="CHEBI:57643"/>
        <dbReference type="ChEBI" id="CHEBI:58168"/>
        <dbReference type="EC" id="3.1.1.4"/>
    </reaction>
</comment>
<comment type="cofactor">
    <cofactor evidence="1">
        <name>Ca(2+)</name>
        <dbReference type="ChEBI" id="CHEBI:29108"/>
    </cofactor>
    <text evidence="1">Binds 1 Ca(2+) ion.</text>
</comment>
<comment type="subcellular location">
    <subcellularLocation>
        <location>Secreted</location>
    </subcellularLocation>
</comment>
<comment type="tissue specificity">
    <text>Expressed by the venom gland.</text>
</comment>
<comment type="similarity">
    <text evidence="4">Belongs to the phospholipase A2 family. Group III subfamily.</text>
</comment>
<reference key="1">
    <citation type="journal article" date="1986" name="Biochemistry">
        <title>Biochemical characterization of the phospholipase A2 purified from the venom of the Mexican beaded lizard (Heloderma horridum horridum Wiegmann).</title>
        <authorList>
            <person name="Sosa B.P."/>
            <person name="Alagon A.C."/>
            <person name="Martin B.M."/>
            <person name="Possani L.D."/>
        </authorList>
    </citation>
    <scope>PROTEIN SEQUENCE</scope>
    <source>
        <tissue>Venom</tissue>
    </source>
</reference>
<protein>
    <recommendedName>
        <fullName>Phospholipase A2</fullName>
        <shortName>PLA2</shortName>
        <ecNumber>3.1.1.4</ecNumber>
    </recommendedName>
    <alternativeName>
        <fullName>Phosphatidylcholine 2-acylhydrolase</fullName>
    </alternativeName>
</protein>
<organism>
    <name type="scientific">Heloderma horridum horridum</name>
    <name type="common">Mexican beaded lizard</name>
    <dbReference type="NCBI Taxonomy" id="8552"/>
    <lineage>
        <taxon>Eukaryota</taxon>
        <taxon>Metazoa</taxon>
        <taxon>Chordata</taxon>
        <taxon>Craniata</taxon>
        <taxon>Vertebrata</taxon>
        <taxon>Euteleostomi</taxon>
        <taxon>Lepidosauria</taxon>
        <taxon>Squamata</taxon>
        <taxon>Bifurcata</taxon>
        <taxon>Unidentata</taxon>
        <taxon>Episquamata</taxon>
        <taxon>Toxicofera</taxon>
        <taxon>Anguimorpha</taxon>
        <taxon>Neoanguimorpha</taxon>
        <taxon>Helodermatidae</taxon>
        <taxon>Heloderma</taxon>
    </lineage>
</organism>
<evidence type="ECO:0000250" key="1"/>
<evidence type="ECO:0000255" key="2">
    <source>
        <dbReference type="PROSITE-ProRule" id="PRU10035"/>
    </source>
</evidence>
<evidence type="ECO:0000255" key="3">
    <source>
        <dbReference type="PROSITE-ProRule" id="PRU10036"/>
    </source>
</evidence>
<evidence type="ECO:0000305" key="4"/>
<accession>P04362</accession>
<keyword id="KW-0106">Calcium</keyword>
<keyword id="KW-0903">Direct protein sequencing</keyword>
<keyword id="KW-0378">Hydrolase</keyword>
<keyword id="KW-0442">Lipid degradation</keyword>
<keyword id="KW-0443">Lipid metabolism</keyword>
<keyword id="KW-0964">Secreted</keyword>
<sequence>GAFIMPGTLWCGAGNAASDYSQLGTEKDTDMCCRDHDHC</sequence>
<name>PA2_HELHO</name>
<dbReference type="EC" id="3.1.1.4"/>
<dbReference type="PIR" id="A05323">
    <property type="entry name" value="A05323"/>
</dbReference>
<dbReference type="SMR" id="P04362"/>
<dbReference type="GO" id="GO:0005576">
    <property type="term" value="C:extracellular region"/>
    <property type="evidence" value="ECO:0007669"/>
    <property type="project" value="UniProtKB-SubCell"/>
</dbReference>
<dbReference type="GO" id="GO:0004623">
    <property type="term" value="F:phospholipase A2 activity"/>
    <property type="evidence" value="ECO:0007669"/>
    <property type="project" value="UniProtKB-EC"/>
</dbReference>
<dbReference type="GO" id="GO:0050482">
    <property type="term" value="P:arachidonate secretion"/>
    <property type="evidence" value="ECO:0007669"/>
    <property type="project" value="InterPro"/>
</dbReference>
<dbReference type="GO" id="GO:0016042">
    <property type="term" value="P:lipid catabolic process"/>
    <property type="evidence" value="ECO:0007669"/>
    <property type="project" value="UniProtKB-KW"/>
</dbReference>
<dbReference type="GO" id="GO:0006644">
    <property type="term" value="P:phospholipid metabolic process"/>
    <property type="evidence" value="ECO:0007669"/>
    <property type="project" value="InterPro"/>
</dbReference>
<dbReference type="Gene3D" id="1.20.90.10">
    <property type="entry name" value="Phospholipase A2 domain"/>
    <property type="match status" value="1"/>
</dbReference>
<dbReference type="InterPro" id="IPR016090">
    <property type="entry name" value="PLipase_A2_dom"/>
</dbReference>
<dbReference type="InterPro" id="IPR036444">
    <property type="entry name" value="PLipase_A2_dom_sf"/>
</dbReference>
<dbReference type="InterPro" id="IPR033113">
    <property type="entry name" value="PLipase_A2_His_AS"/>
</dbReference>
<dbReference type="PANTHER" id="PTHR12253">
    <property type="entry name" value="RH14732P"/>
    <property type="match status" value="1"/>
</dbReference>
<dbReference type="Pfam" id="PF05826">
    <property type="entry name" value="Phospholip_A2_2"/>
    <property type="match status" value="1"/>
</dbReference>
<dbReference type="SUPFAM" id="SSF48619">
    <property type="entry name" value="Phospholipase A2, PLA2"/>
    <property type="match status" value="1"/>
</dbReference>
<dbReference type="PROSITE" id="PS00118">
    <property type="entry name" value="PA2_HIS"/>
    <property type="match status" value="1"/>
</dbReference>
<proteinExistence type="evidence at protein level"/>